<keyword id="KW-0058">Aromatic hydrocarbons catabolism</keyword>
<keyword id="KW-0456">Lyase</keyword>
<keyword id="KW-0464">Manganese</keyword>
<keyword id="KW-0479">Metal-binding</keyword>
<keyword id="KW-1185">Reference proteome</keyword>
<evidence type="ECO:0000255" key="1">
    <source>
        <dbReference type="HAMAP-Rule" id="MF_01656"/>
    </source>
</evidence>
<protein>
    <recommendedName>
        <fullName evidence="1">4-hydroxy-2-oxovalerate aldolase 2</fullName>
        <shortName evidence="1">HOA 2</shortName>
        <ecNumber evidence="1">4.1.3.39</ecNumber>
    </recommendedName>
    <alternativeName>
        <fullName evidence="1">4-hydroxy-2-keto-pentanoic acid aldolase 2</fullName>
    </alternativeName>
    <alternativeName>
        <fullName evidence="1">4-hydroxy-2-oxopentanoate aldolase 2</fullName>
    </alternativeName>
</protein>
<feature type="chain" id="PRO_0000387797" description="4-hydroxy-2-oxovalerate aldolase 2">
    <location>
        <begin position="1"/>
        <end position="339"/>
    </location>
</feature>
<feature type="domain" description="Pyruvate carboxyltransferase" evidence="1">
    <location>
        <begin position="5"/>
        <end position="257"/>
    </location>
</feature>
<feature type="active site" description="Proton acceptor" evidence="1">
    <location>
        <position position="17"/>
    </location>
</feature>
<feature type="binding site" evidence="1">
    <location>
        <begin position="13"/>
        <end position="14"/>
    </location>
    <ligand>
        <name>substrate</name>
    </ligand>
</feature>
<feature type="binding site" evidence="1">
    <location>
        <position position="14"/>
    </location>
    <ligand>
        <name>Mn(2+)</name>
        <dbReference type="ChEBI" id="CHEBI:29035"/>
    </ligand>
</feature>
<feature type="binding site" evidence="1">
    <location>
        <position position="167"/>
    </location>
    <ligand>
        <name>substrate</name>
    </ligand>
</feature>
<feature type="binding site" evidence="1">
    <location>
        <position position="196"/>
    </location>
    <ligand>
        <name>Mn(2+)</name>
        <dbReference type="ChEBI" id="CHEBI:29035"/>
    </ligand>
</feature>
<feature type="binding site" evidence="1">
    <location>
        <position position="196"/>
    </location>
    <ligand>
        <name>substrate</name>
    </ligand>
</feature>
<feature type="binding site" evidence="1">
    <location>
        <position position="198"/>
    </location>
    <ligand>
        <name>Mn(2+)</name>
        <dbReference type="ChEBI" id="CHEBI:29035"/>
    </ligand>
</feature>
<feature type="binding site" evidence="1">
    <location>
        <position position="287"/>
    </location>
    <ligand>
        <name>substrate</name>
    </ligand>
</feature>
<feature type="site" description="Transition state stabilizer" evidence="1">
    <location>
        <position position="13"/>
    </location>
</feature>
<proteinExistence type="inferred from homology"/>
<sequence>MDKKLYISDVTLRDGMHAIRHQYSIQNVQDIARALDEAKVDSIEVAHGDGLQGSSFNYGFGAHSDLEWIEAVADVVRHAKIATLLLPGIGTIHDLKAAYDAGARVVRVATHCTEADISKQHIEYARSLGMDTVGFLMMSHMTTPENLAVEAKKMESYGATCVYVVDSGGAMNMNDIRARFMALKATLDPATQTGMHAHHNLSLGVANSIVAVEEGCDRVDASLAGMGAGAGNAPLEVFIAAVERMGWHHGTDLYRLLDAADDIVRPLQDRPVRVDRETLALGYAGVYSSFLRHSEIAANKYGLKAVDILVELGKRRMVGGQEDMIVDVALDLKKREAHA</sequence>
<reference key="1">
    <citation type="journal article" date="2014" name="Stand. Genomic Sci.">
        <title>Complete genome sequence of Burkholderia phymatum STM815(T), a broad host range and efficient nitrogen-fixing symbiont of Mimosa species.</title>
        <authorList>
            <person name="Moulin L."/>
            <person name="Klonowska A."/>
            <person name="Caroline B."/>
            <person name="Booth K."/>
            <person name="Vriezen J.A."/>
            <person name="Melkonian R."/>
            <person name="James E.K."/>
            <person name="Young J.P."/>
            <person name="Bena G."/>
            <person name="Hauser L."/>
            <person name="Land M."/>
            <person name="Kyrpides N."/>
            <person name="Bruce D."/>
            <person name="Chain P."/>
            <person name="Copeland A."/>
            <person name="Pitluck S."/>
            <person name="Woyke T."/>
            <person name="Lizotte-Waniewski M."/>
            <person name="Bristow J."/>
            <person name="Riley M."/>
        </authorList>
    </citation>
    <scope>NUCLEOTIDE SEQUENCE [LARGE SCALE GENOMIC DNA]</scope>
    <source>
        <strain>DSM 17167 / CIP 108236 / LMG 21445 / STM815</strain>
    </source>
</reference>
<accession>B2JQW0</accession>
<comment type="catalytic activity">
    <reaction evidence="1">
        <text>(S)-4-hydroxy-2-oxopentanoate = acetaldehyde + pyruvate</text>
        <dbReference type="Rhea" id="RHEA:22624"/>
        <dbReference type="ChEBI" id="CHEBI:15343"/>
        <dbReference type="ChEBI" id="CHEBI:15361"/>
        <dbReference type="ChEBI" id="CHEBI:73143"/>
        <dbReference type="EC" id="4.1.3.39"/>
    </reaction>
</comment>
<comment type="similarity">
    <text evidence="1">Belongs to the 4-hydroxy-2-oxovalerate aldolase family.</text>
</comment>
<name>HOA2_PARP8</name>
<dbReference type="EC" id="4.1.3.39" evidence="1"/>
<dbReference type="EMBL" id="CP001044">
    <property type="protein sequence ID" value="ACC73651.1"/>
    <property type="molecule type" value="Genomic_DNA"/>
</dbReference>
<dbReference type="SMR" id="B2JQW0"/>
<dbReference type="STRING" id="391038.Bphy_4539"/>
<dbReference type="KEGG" id="bph:Bphy_4539"/>
<dbReference type="eggNOG" id="COG0119">
    <property type="taxonomic scope" value="Bacteria"/>
</dbReference>
<dbReference type="HOGENOM" id="CLU_049173_0_0_4"/>
<dbReference type="OrthoDB" id="9803573at2"/>
<dbReference type="Proteomes" id="UP000001192">
    <property type="component" value="Chromosome 2"/>
</dbReference>
<dbReference type="GO" id="GO:0003852">
    <property type="term" value="F:2-isopropylmalate synthase activity"/>
    <property type="evidence" value="ECO:0007669"/>
    <property type="project" value="TreeGrafter"/>
</dbReference>
<dbReference type="GO" id="GO:0008701">
    <property type="term" value="F:4-hydroxy-2-oxovalerate aldolase activity"/>
    <property type="evidence" value="ECO:0007669"/>
    <property type="project" value="UniProtKB-UniRule"/>
</dbReference>
<dbReference type="GO" id="GO:0030145">
    <property type="term" value="F:manganese ion binding"/>
    <property type="evidence" value="ECO:0007669"/>
    <property type="project" value="UniProtKB-UniRule"/>
</dbReference>
<dbReference type="GO" id="GO:0009056">
    <property type="term" value="P:catabolic process"/>
    <property type="evidence" value="ECO:0007669"/>
    <property type="project" value="UniProtKB-KW"/>
</dbReference>
<dbReference type="GO" id="GO:0009098">
    <property type="term" value="P:L-leucine biosynthetic process"/>
    <property type="evidence" value="ECO:0007669"/>
    <property type="project" value="TreeGrafter"/>
</dbReference>
<dbReference type="CDD" id="cd07943">
    <property type="entry name" value="DRE_TIM_HOA"/>
    <property type="match status" value="1"/>
</dbReference>
<dbReference type="FunFam" id="1.10.8.60:FF:000042">
    <property type="entry name" value="4-hydroxy-2-oxovalerate aldolase"/>
    <property type="match status" value="1"/>
</dbReference>
<dbReference type="Gene3D" id="1.10.8.60">
    <property type="match status" value="1"/>
</dbReference>
<dbReference type="Gene3D" id="3.20.20.70">
    <property type="entry name" value="Aldolase class I"/>
    <property type="match status" value="1"/>
</dbReference>
<dbReference type="HAMAP" id="MF_01656">
    <property type="entry name" value="HOA"/>
    <property type="match status" value="1"/>
</dbReference>
<dbReference type="InterPro" id="IPR050073">
    <property type="entry name" value="2-IPM_HCS-like"/>
</dbReference>
<dbReference type="InterPro" id="IPR017629">
    <property type="entry name" value="4OH_2_O-val_aldolase"/>
</dbReference>
<dbReference type="InterPro" id="IPR013785">
    <property type="entry name" value="Aldolase_TIM"/>
</dbReference>
<dbReference type="InterPro" id="IPR012425">
    <property type="entry name" value="DmpG_comm"/>
</dbReference>
<dbReference type="InterPro" id="IPR035685">
    <property type="entry name" value="DRE_TIM_HOA"/>
</dbReference>
<dbReference type="InterPro" id="IPR000891">
    <property type="entry name" value="PYR_CT"/>
</dbReference>
<dbReference type="NCBIfam" id="TIGR03217">
    <property type="entry name" value="4OH_2_O_val_ald"/>
    <property type="match status" value="1"/>
</dbReference>
<dbReference type="NCBIfam" id="NF006049">
    <property type="entry name" value="PRK08195.1"/>
    <property type="match status" value="1"/>
</dbReference>
<dbReference type="PANTHER" id="PTHR10277:SF9">
    <property type="entry name" value="2-ISOPROPYLMALATE SYNTHASE 1, CHLOROPLASTIC-RELATED"/>
    <property type="match status" value="1"/>
</dbReference>
<dbReference type="PANTHER" id="PTHR10277">
    <property type="entry name" value="HOMOCITRATE SYNTHASE-RELATED"/>
    <property type="match status" value="1"/>
</dbReference>
<dbReference type="Pfam" id="PF07836">
    <property type="entry name" value="DmpG_comm"/>
    <property type="match status" value="1"/>
</dbReference>
<dbReference type="Pfam" id="PF00682">
    <property type="entry name" value="HMGL-like"/>
    <property type="match status" value="1"/>
</dbReference>
<dbReference type="SUPFAM" id="SSF51569">
    <property type="entry name" value="Aldolase"/>
    <property type="match status" value="1"/>
</dbReference>
<dbReference type="SUPFAM" id="SSF89000">
    <property type="entry name" value="post-HMGL domain-like"/>
    <property type="match status" value="1"/>
</dbReference>
<dbReference type="PROSITE" id="PS50991">
    <property type="entry name" value="PYR_CT"/>
    <property type="match status" value="1"/>
</dbReference>
<gene>
    <name type="ordered locus">Bphy_4539</name>
</gene>
<organism>
    <name type="scientific">Paraburkholderia phymatum (strain DSM 17167 / CIP 108236 / LMG 21445 / STM815)</name>
    <name type="common">Burkholderia phymatum</name>
    <dbReference type="NCBI Taxonomy" id="391038"/>
    <lineage>
        <taxon>Bacteria</taxon>
        <taxon>Pseudomonadati</taxon>
        <taxon>Pseudomonadota</taxon>
        <taxon>Betaproteobacteria</taxon>
        <taxon>Burkholderiales</taxon>
        <taxon>Burkholderiaceae</taxon>
        <taxon>Paraburkholderia</taxon>
    </lineage>
</organism>